<name>PVK1_PERAM</name>
<keyword id="KW-0027">Amidation</keyword>
<keyword id="KW-0903">Direct protein sequencing</keyword>
<keyword id="KW-0527">Neuropeptide</keyword>
<keyword id="KW-0964">Secreted</keyword>
<comment type="function">
    <text>Myoactive peptide; has excitatory actions on the hyperneural muscle.</text>
</comment>
<comment type="subcellular location">
    <subcellularLocation>
        <location>Secreted</location>
    </subcellularLocation>
</comment>
<comment type="similarity">
    <text evidence="2">Belongs to the periviscerokinin family.</text>
</comment>
<evidence type="ECO:0000269" key="1">
    <source>
    </source>
</evidence>
<evidence type="ECO:0000305" key="2"/>
<sequence>GASGLIPVMRN</sequence>
<feature type="peptide" id="PRO_0000044250" description="Periviscerokinin-1">
    <location>
        <begin position="1"/>
        <end position="11"/>
    </location>
</feature>
<feature type="modified residue" description="Asparagine amide" evidence="1">
    <location>
        <position position="11"/>
    </location>
</feature>
<proteinExistence type="evidence at protein level"/>
<dbReference type="GO" id="GO:0005576">
    <property type="term" value="C:extracellular region"/>
    <property type="evidence" value="ECO:0007669"/>
    <property type="project" value="UniProtKB-SubCell"/>
</dbReference>
<dbReference type="GO" id="GO:0007218">
    <property type="term" value="P:neuropeptide signaling pathway"/>
    <property type="evidence" value="ECO:0007669"/>
    <property type="project" value="UniProtKB-KW"/>
</dbReference>
<reference key="1">
    <citation type="journal article" date="1995" name="Peptides">
        <title>Periviscerokinin (Pea-PVK): a novel myotropic neuropeptide from the perisympathetic organs of the American cockroach.</title>
        <authorList>
            <person name="Predel R."/>
            <person name="Linde D."/>
            <person name="Rapus J."/>
            <person name="Vettermann S."/>
            <person name="Penzlin H."/>
        </authorList>
    </citation>
    <scope>PROTEIN SEQUENCE</scope>
    <scope>SYNTHESIS</scope>
    <source>
        <tissue>Abdominal perisympathetic organs</tissue>
    </source>
</reference>
<reference key="2">
    <citation type="journal article" date="2009" name="BMC Evol. Biol.">
        <title>A proteomic approach for studying insect phylogeny: CAPA peptides of ancient insect taxa (Dictyoptera, Blattoptera) as a test case.</title>
        <authorList>
            <person name="Roth S."/>
            <person name="Fromm B."/>
            <person name="Gaede G."/>
            <person name="Predel R."/>
        </authorList>
    </citation>
    <scope>PROTEIN SEQUENCE</scope>
    <scope>AMIDATION AT ASN-11</scope>
    <source>
        <tissue>Abdominal perisympathetic organs</tissue>
    </source>
</reference>
<accession>P41837</accession>
<protein>
    <recommendedName>
        <fullName>Periviscerokinin-1</fullName>
        <shortName>Pea-PVK-1</shortName>
        <shortName>PerAm-PVK-1</shortName>
    </recommendedName>
</protein>
<organism>
    <name type="scientific">Periplaneta americana</name>
    <name type="common">American cockroach</name>
    <name type="synonym">Blatta americana</name>
    <dbReference type="NCBI Taxonomy" id="6978"/>
    <lineage>
        <taxon>Eukaryota</taxon>
        <taxon>Metazoa</taxon>
        <taxon>Ecdysozoa</taxon>
        <taxon>Arthropoda</taxon>
        <taxon>Hexapoda</taxon>
        <taxon>Insecta</taxon>
        <taxon>Pterygota</taxon>
        <taxon>Neoptera</taxon>
        <taxon>Polyneoptera</taxon>
        <taxon>Dictyoptera</taxon>
        <taxon>Blattodea</taxon>
        <taxon>Blattoidea</taxon>
        <taxon>Blattidae</taxon>
        <taxon>Blattinae</taxon>
        <taxon>Periplaneta</taxon>
    </lineage>
</organism>